<evidence type="ECO:0000250" key="1"/>
<evidence type="ECO:0000250" key="2">
    <source>
        <dbReference type="UniProtKB" id="E4QP00"/>
    </source>
</evidence>
<evidence type="ECO:0000269" key="3">
    <source>
    </source>
</evidence>
<evidence type="ECO:0000269" key="4">
    <source>
    </source>
</evidence>
<evidence type="ECO:0000269" key="5">
    <source>
    </source>
</evidence>
<evidence type="ECO:0000305" key="6"/>
<evidence type="ECO:0000305" key="7">
    <source>
    </source>
</evidence>
<evidence type="ECO:0000305" key="8">
    <source>
    </source>
</evidence>
<protein>
    <recommendedName>
        <fullName>Fructose dehydrogenase large subunit</fullName>
        <ecNumber evidence="3 5">1.1.5.14</ecNumber>
    </recommendedName>
    <alternativeName>
        <fullName>Fructose dehydrogenase subunit I</fullName>
    </alternativeName>
</protein>
<dbReference type="EC" id="1.1.5.14" evidence="3 5"/>
<dbReference type="EMBL" id="AB728565">
    <property type="protein sequence ID" value="BAM93252.1"/>
    <property type="molecule type" value="Genomic_DNA"/>
</dbReference>
<dbReference type="PDB" id="7W2J">
    <property type="method" value="EM"/>
    <property type="resolution" value="3.60 A"/>
    <property type="chains" value="A/D=1-544"/>
</dbReference>
<dbReference type="PDB" id="7WSQ">
    <property type="method" value="EM"/>
    <property type="resolution" value="3.80 A"/>
    <property type="chains" value="A/D=1-544"/>
</dbReference>
<dbReference type="PDB" id="8JEJ">
    <property type="method" value="EM"/>
    <property type="resolution" value="2.50 A"/>
    <property type="chains" value="A=1-544"/>
</dbReference>
<dbReference type="PDB" id="8JEK">
    <property type="method" value="EM"/>
    <property type="resolution" value="2.70 A"/>
    <property type="chains" value="A=1-544"/>
</dbReference>
<dbReference type="PDB" id="8K6J">
    <property type="method" value="EM"/>
    <property type="resolution" value="2.77 A"/>
    <property type="chains" value="A=1-544"/>
</dbReference>
<dbReference type="PDB" id="8K6K">
    <property type="method" value="EM"/>
    <property type="resolution" value="2.40 A"/>
    <property type="chains" value="A=1-544"/>
</dbReference>
<dbReference type="PDB" id="8XCM">
    <property type="method" value="EM"/>
    <property type="resolution" value="3.08 A"/>
    <property type="chains" value="A=1-544"/>
</dbReference>
<dbReference type="PDB" id="8XCN">
    <property type="method" value="EM"/>
    <property type="resolution" value="3.02 A"/>
    <property type="chains" value="A=1-544"/>
</dbReference>
<dbReference type="PDBsum" id="7W2J"/>
<dbReference type="PDBsum" id="7WSQ"/>
<dbReference type="PDBsum" id="8JEJ"/>
<dbReference type="PDBsum" id="8JEK"/>
<dbReference type="PDBsum" id="8K6J"/>
<dbReference type="PDBsum" id="8K6K"/>
<dbReference type="PDBsum" id="8XCM"/>
<dbReference type="PDBsum" id="8XCN"/>
<dbReference type="EMDB" id="EMD-32262"/>
<dbReference type="EMDB" id="EMD-32764"/>
<dbReference type="EMDB" id="EMD-36190"/>
<dbReference type="EMDB" id="EMD-36191"/>
<dbReference type="EMDB" id="EMD-36920"/>
<dbReference type="EMDB" id="EMD-36921"/>
<dbReference type="EMDB" id="EMD-38247"/>
<dbReference type="EMDB" id="EMD-38248"/>
<dbReference type="SMR" id="M1VMF7"/>
<dbReference type="KEGG" id="ag:BAM93252"/>
<dbReference type="BioCyc" id="MetaCyc:MONOMER-21743"/>
<dbReference type="GO" id="GO:0005886">
    <property type="term" value="C:plasma membrane"/>
    <property type="evidence" value="ECO:0007669"/>
    <property type="project" value="UniProtKB-SubCell"/>
</dbReference>
<dbReference type="GO" id="GO:0050660">
    <property type="term" value="F:flavin adenine dinucleotide binding"/>
    <property type="evidence" value="ECO:0000314"/>
    <property type="project" value="UniProtKB"/>
</dbReference>
<dbReference type="GO" id="GO:0047904">
    <property type="term" value="F:fructose 5-dehydrogenase activity"/>
    <property type="evidence" value="ECO:0000314"/>
    <property type="project" value="UniProtKB"/>
</dbReference>
<dbReference type="GO" id="GO:0006000">
    <property type="term" value="P:fructose metabolic process"/>
    <property type="evidence" value="ECO:0000314"/>
    <property type="project" value="UniProtKB"/>
</dbReference>
<dbReference type="FunFam" id="3.50.50.60:FF:000823">
    <property type="entry name" value="Fructose dehydrogenase large subunit"/>
    <property type="match status" value="1"/>
</dbReference>
<dbReference type="Gene3D" id="3.50.50.60">
    <property type="entry name" value="FAD/NAD(P)-binding domain"/>
    <property type="match status" value="2"/>
</dbReference>
<dbReference type="InterPro" id="IPR036188">
    <property type="entry name" value="FAD/NAD-bd_sf"/>
</dbReference>
<dbReference type="InterPro" id="IPR000172">
    <property type="entry name" value="GMC_OxRdtase_N"/>
</dbReference>
<dbReference type="InterPro" id="IPR007867">
    <property type="entry name" value="GMC_OxRtase_C"/>
</dbReference>
<dbReference type="InterPro" id="IPR051473">
    <property type="entry name" value="P2Ox-like"/>
</dbReference>
<dbReference type="PANTHER" id="PTHR42784">
    <property type="entry name" value="PYRANOSE 2-OXIDASE"/>
    <property type="match status" value="1"/>
</dbReference>
<dbReference type="PANTHER" id="PTHR42784:SF1">
    <property type="entry name" value="PYRANOSE 2-OXIDASE"/>
    <property type="match status" value="1"/>
</dbReference>
<dbReference type="Pfam" id="PF05199">
    <property type="entry name" value="GMC_oxred_C"/>
    <property type="match status" value="1"/>
</dbReference>
<dbReference type="Pfam" id="PF00732">
    <property type="entry name" value="GMC_oxred_N"/>
    <property type="match status" value="1"/>
</dbReference>
<dbReference type="Pfam" id="PF13450">
    <property type="entry name" value="NAD_binding_8"/>
    <property type="match status" value="1"/>
</dbReference>
<dbReference type="SUPFAM" id="SSF54373">
    <property type="entry name" value="FAD-linked reductases, C-terminal domain"/>
    <property type="match status" value="1"/>
</dbReference>
<dbReference type="SUPFAM" id="SSF51905">
    <property type="entry name" value="FAD/NAD(P)-binding domain"/>
    <property type="match status" value="1"/>
</dbReference>
<accession>M1VMF7</accession>
<reference key="1">
    <citation type="journal article" date="2013" name="Appl. Environ. Microbiol.">
        <title>Heterologous overexpression and characterization of a flavoprotein-cytochrome c complex fructose dehydrogenase of Gluconobacter japonicus NBRC3260.</title>
        <authorList>
            <person name="Kawai S."/>
            <person name="Goda-Tsutsumi M."/>
            <person name="Yakushi T."/>
            <person name="Kano K."/>
            <person name="Matsushita K."/>
        </authorList>
    </citation>
    <scope>NUCLEOTIDE SEQUENCE [GENOMIC DNA]</scope>
    <scope>PROTEIN SEQUENCE OF 2-24</scope>
    <scope>FUNCTION</scope>
    <scope>CATALYTIC ACTIVITY</scope>
    <scope>COFACTOR</scope>
    <scope>BIOTECHNOLOGY</scope>
    <scope>SUBUNIT</scope>
    <scope>SUBCELLULAR LOCATION</scope>
    <source>
        <strain>ATCC 12302 / IAM 1816 / JCM 20278 / NBRC 3260</strain>
    </source>
</reference>
<reference key="2">
    <citation type="journal article" date="1981" name="J. Bacteriol.">
        <title>D-fructose dehydrogenase of Gluconobacter industrius: purification, characterization, and application to enzymatic microdetermination of D-fructose.</title>
        <authorList>
            <person name="Ameyama M."/>
            <person name="Shinagawa E."/>
            <person name="Matsushita K."/>
            <person name="Adachi O."/>
        </authorList>
    </citation>
    <scope>FUNCTION</scope>
    <scope>CATALYTIC ACTIVITY</scope>
    <scope>COFACTOR</scope>
    <scope>BIOPHYSICOCHEMICAL PROPERTIES</scope>
    <scope>SUBUNIT</scope>
    <scope>SUBCELLULAR LOCATION</scope>
    <source>
        <strain>ATCC 12302 / IAM 1816 / JCM 20278 / NBRC 3260</strain>
    </source>
</reference>
<reference key="3">
    <citation type="journal article" date="2013" name="PLoS ONE">
        <title>Rapid identification of sequences for orphan enzymes to power accurate protein annotation.</title>
        <authorList>
            <person name="Ramkissoon K.R."/>
            <person name="Miller J.K."/>
            <person name="Ojha S."/>
            <person name="Watson D.S."/>
            <person name="Bomar M.G."/>
            <person name="Galande A.K."/>
            <person name="Shearer A.G."/>
        </authorList>
    </citation>
    <scope>IDENTIFICATION BY MASS SPECTROMETRY</scope>
    <scope>FUNCTION</scope>
</reference>
<keyword id="KW-0002">3D-structure</keyword>
<keyword id="KW-1003">Cell membrane</keyword>
<keyword id="KW-0903">Direct protein sequencing</keyword>
<keyword id="KW-0274">FAD</keyword>
<keyword id="KW-0285">Flavoprotein</keyword>
<keyword id="KW-0472">Membrane</keyword>
<keyword id="KW-0560">Oxidoreductase</keyword>
<comment type="function">
    <text evidence="3 4 5">Catalytic subunit of fructose dehydrogenase, an enzyme that catalyzes the oxidation of D-fructose to produce 5-keto-D-fructose.</text>
</comment>
<comment type="catalytic activity">
    <reaction evidence="3 5">
        <text>keto-D-fructose + a ubiquinone = 5-dehydro-D-fructose + a ubiquinol</text>
        <dbReference type="Rhea" id="RHEA:22304"/>
        <dbReference type="Rhea" id="RHEA-COMP:9565"/>
        <dbReference type="Rhea" id="RHEA-COMP:9566"/>
        <dbReference type="ChEBI" id="CHEBI:16389"/>
        <dbReference type="ChEBI" id="CHEBI:17011"/>
        <dbReference type="ChEBI" id="CHEBI:17976"/>
        <dbReference type="ChEBI" id="CHEBI:48095"/>
        <dbReference type="EC" id="1.1.5.14"/>
    </reaction>
</comment>
<comment type="cofactor">
    <cofactor evidence="7 8">
        <name>FAD</name>
        <dbReference type="ChEBI" id="CHEBI:57692"/>
    </cofactor>
</comment>
<comment type="biophysicochemical properties">
    <kinetics>
        <KM evidence="5">0.02 M for D-fructose</KM>
        <text>Measured for the whole complex.</text>
    </kinetics>
    <phDependence>
        <text evidence="5">Optimum pH is 4.0.</text>
    </phDependence>
</comment>
<comment type="subunit">
    <text evidence="3 5">Heterotrimer composed of FdhL, FdhS and FdhC.</text>
</comment>
<comment type="subcellular location">
    <subcellularLocation>
        <location evidence="3 5">Cell membrane</location>
    </subcellularLocation>
</comment>
<comment type="biotechnology">
    <text evidence="3">This enzyme is commonly used in a number of research projects to examine the electrochemical properties of enzyme-catalyzed electrode reactions, named bioelectrocatalysis. Available as a commercial product from Sigma Aldrich (catalog number F4892).</text>
</comment>
<comment type="similarity">
    <text evidence="6">Belongs to the GMC oxidoreductase family.</text>
</comment>
<sequence>MSNETLSADVVIIGAGICGSLLAHKLVRNGLSVLLLDAGPRRDRSQIVENWRNMPPDNKSQYDYATPYPSVPWAPHTNYFPDNNYLIVKGPDRTAYKQGIIKGVGGTTWHWAASSWRYLPNDFKLHSTYGVGRDYAMSYDELEPYYYEAECEMGVMGPNGEEITPSAPRQNPWPMTSMPYGYGDRTFTEIVSKLGFSNTPVPQARNSRPYDGRPQCCGNNNCMPICPIGAMYNGVYAAIKAEKLGAKIIPNAVVYAMETDAKNRITAISFYDPDKQSHRVVAKTFVIAANGIETPKLLLLAANDRNPHGIANSSDLVGRNMMDHPGIGMSFQSAEPIWAGGGSVQMSSITNFRDGDFRSEYAATQIGYNNTAQNSRAGMKALSMGLVGKKLDEEIRRRTAHGVDIYANHEVLPDPNNRLVLSKDYKDALGIPHPEVTYDVGEYVRKSAAISRQRLMDIAKAMGGTEIEMTPYFTPNNHITGGTIMGHDPRDSVVDKWLRTHDHSNLFLATGATMAASGTVNSTLTMAALSLRAADAILNDLKQG</sequence>
<name>FDHL_GLUJA</name>
<proteinExistence type="evidence at protein level"/>
<organism>
    <name type="scientific">Gluconobacter japonicus</name>
    <dbReference type="NCBI Taxonomy" id="376620"/>
    <lineage>
        <taxon>Bacteria</taxon>
        <taxon>Pseudomonadati</taxon>
        <taxon>Pseudomonadota</taxon>
        <taxon>Alphaproteobacteria</taxon>
        <taxon>Acetobacterales</taxon>
        <taxon>Acetobacteraceae</taxon>
        <taxon>Gluconobacter</taxon>
    </lineage>
</organism>
<gene>
    <name type="primary">fdhL</name>
</gene>
<feature type="initiator methionine" description="Removed" evidence="3">
    <location>
        <position position="1"/>
    </location>
</feature>
<feature type="chain" id="PRO_0000425552" description="Fructose dehydrogenase large subunit">
    <location>
        <begin position="2"/>
        <end position="544"/>
    </location>
</feature>
<feature type="active site" description="Proton acceptor" evidence="2">
    <location>
        <position position="478"/>
    </location>
</feature>
<feature type="binding site" evidence="1">
    <location>
        <begin position="14"/>
        <end position="30"/>
    </location>
    <ligand>
        <name>FAD</name>
        <dbReference type="ChEBI" id="CHEBI:57692"/>
    </ligand>
</feature>